<evidence type="ECO:0000255" key="1">
    <source>
        <dbReference type="HAMAP-Rule" id="MF_00312"/>
    </source>
</evidence>
<sequence>MFKKIGVVGDKDSVLAFKALGIDVFPVVGNEEAKKTVDKLAKNDYAVVFVTEHVAQGIEETIERYNKEVLPAVILIPSNQGTLNIGMQRISDNVEKAVGVNIL</sequence>
<comment type="function">
    <text evidence="1">Produces ATP from ADP in the presence of a proton gradient across the membrane.</text>
</comment>
<comment type="similarity">
    <text evidence="1">Belongs to the V-ATPase F subunit family.</text>
</comment>
<organism>
    <name type="scientific">Clostridium botulinum (strain Alaska E43 / Type E3)</name>
    <dbReference type="NCBI Taxonomy" id="508767"/>
    <lineage>
        <taxon>Bacteria</taxon>
        <taxon>Bacillati</taxon>
        <taxon>Bacillota</taxon>
        <taxon>Clostridia</taxon>
        <taxon>Eubacteriales</taxon>
        <taxon>Clostridiaceae</taxon>
        <taxon>Clostridium</taxon>
    </lineage>
</organism>
<gene>
    <name evidence="1" type="primary">atpF</name>
    <name type="ordered locus">CLH_2590</name>
</gene>
<protein>
    <recommendedName>
        <fullName evidence="1">V-type ATP synthase subunit F</fullName>
    </recommendedName>
    <alternativeName>
        <fullName evidence="1">V-ATPase subunit F</fullName>
    </alternativeName>
</protein>
<name>VATF_CLOBA</name>
<keyword id="KW-0066">ATP synthesis</keyword>
<keyword id="KW-0375">Hydrogen ion transport</keyword>
<keyword id="KW-0406">Ion transport</keyword>
<keyword id="KW-0813">Transport</keyword>
<reference key="1">
    <citation type="submission" date="2008-05" db="EMBL/GenBank/DDBJ databases">
        <title>Complete genome sequence of Clostridium botulinum E3 str. Alaska E43.</title>
        <authorList>
            <person name="Brinkac L.M."/>
            <person name="Brown J.L."/>
            <person name="Bruce D."/>
            <person name="Detter C."/>
            <person name="Munk C."/>
            <person name="Smith L.A."/>
            <person name="Smith T.J."/>
            <person name="Sutton G."/>
            <person name="Brettin T.S."/>
        </authorList>
    </citation>
    <scope>NUCLEOTIDE SEQUENCE [LARGE SCALE GENOMIC DNA]</scope>
    <source>
        <strain>Alaska E43 / Type E3</strain>
    </source>
</reference>
<proteinExistence type="inferred from homology"/>
<accession>B2UWY5</accession>
<feature type="chain" id="PRO_1000115685" description="V-type ATP synthase subunit F">
    <location>
        <begin position="1"/>
        <end position="103"/>
    </location>
</feature>
<dbReference type="EMBL" id="CP001078">
    <property type="protein sequence ID" value="ACD53699.1"/>
    <property type="molecule type" value="Genomic_DNA"/>
</dbReference>
<dbReference type="RefSeq" id="WP_003373988.1">
    <property type="nucleotide sequence ID" value="NC_010723.1"/>
</dbReference>
<dbReference type="SMR" id="B2UWY5"/>
<dbReference type="KEGG" id="cbt:CLH_2590"/>
<dbReference type="HOGENOM" id="CLU_135754_1_0_9"/>
<dbReference type="GO" id="GO:0005524">
    <property type="term" value="F:ATP binding"/>
    <property type="evidence" value="ECO:0007669"/>
    <property type="project" value="UniProtKB-UniRule"/>
</dbReference>
<dbReference type="GO" id="GO:0046933">
    <property type="term" value="F:proton-transporting ATP synthase activity, rotational mechanism"/>
    <property type="evidence" value="ECO:0007669"/>
    <property type="project" value="UniProtKB-UniRule"/>
</dbReference>
<dbReference type="GO" id="GO:0046961">
    <property type="term" value="F:proton-transporting ATPase activity, rotational mechanism"/>
    <property type="evidence" value="ECO:0007669"/>
    <property type="project" value="InterPro"/>
</dbReference>
<dbReference type="GO" id="GO:0042777">
    <property type="term" value="P:proton motive force-driven plasma membrane ATP synthesis"/>
    <property type="evidence" value="ECO:0007669"/>
    <property type="project" value="UniProtKB-UniRule"/>
</dbReference>
<dbReference type="Gene3D" id="3.40.50.10580">
    <property type="entry name" value="ATPase, V1 complex, subunit F"/>
    <property type="match status" value="1"/>
</dbReference>
<dbReference type="HAMAP" id="MF_00312">
    <property type="entry name" value="ATP_synth_F_arch"/>
    <property type="match status" value="1"/>
</dbReference>
<dbReference type="InterPro" id="IPR008218">
    <property type="entry name" value="ATPase_V1-cplx_f_g_su"/>
</dbReference>
<dbReference type="InterPro" id="IPR022944">
    <property type="entry name" value="ATPase_V1-cplx_fsu_bac/arc"/>
</dbReference>
<dbReference type="InterPro" id="IPR036906">
    <property type="entry name" value="ATPase_V1_fsu_sf"/>
</dbReference>
<dbReference type="NCBIfam" id="NF002384">
    <property type="entry name" value="PRK01395.1"/>
    <property type="match status" value="1"/>
</dbReference>
<dbReference type="Pfam" id="PF01990">
    <property type="entry name" value="ATP-synt_F"/>
    <property type="match status" value="1"/>
</dbReference>
<dbReference type="SUPFAM" id="SSF159468">
    <property type="entry name" value="AtpF-like"/>
    <property type="match status" value="1"/>
</dbReference>